<dbReference type="EMBL" id="AK142080">
    <property type="protein sequence ID" value="BAE24933.1"/>
    <property type="molecule type" value="mRNA"/>
</dbReference>
<dbReference type="EMBL" id="AK167507">
    <property type="protein sequence ID" value="BAE39583.1"/>
    <property type="molecule type" value="mRNA"/>
</dbReference>
<dbReference type="EMBL" id="BC088734">
    <property type="protein sequence ID" value="AAH88734.1"/>
    <property type="status" value="ALT_INIT"/>
    <property type="molecule type" value="mRNA"/>
</dbReference>
<dbReference type="EMBL" id="AB093302">
    <property type="protein sequence ID" value="BAC41484.1"/>
    <property type="molecule type" value="mRNA"/>
</dbReference>
<dbReference type="CCDS" id="CCDS51856.1">
    <molecule id="Q3UQV5-1"/>
</dbReference>
<dbReference type="CCDS" id="CCDS51857.1">
    <molecule id="Q3UQV5-2"/>
</dbReference>
<dbReference type="RefSeq" id="NP_001008785.2">
    <molecule id="Q3UQV5-1"/>
    <property type="nucleotide sequence ID" value="NM_001008785.5"/>
</dbReference>
<dbReference type="RefSeq" id="NP_001096140.1">
    <molecule id="Q3UQV5-2"/>
    <property type="nucleotide sequence ID" value="NM_001102670.2"/>
</dbReference>
<dbReference type="SMR" id="Q3UQV5"/>
<dbReference type="BioGRID" id="232538">
    <property type="interactions" value="8"/>
</dbReference>
<dbReference type="FunCoup" id="Q3UQV5">
    <property type="interactions" value="62"/>
</dbReference>
<dbReference type="STRING" id="10090.ENSMUSP00000032107"/>
<dbReference type="iPTMnet" id="Q3UQV5"/>
<dbReference type="PhosphoSitePlus" id="Q3UQV5"/>
<dbReference type="PaxDb" id="10090-ENSMUSP00000032107"/>
<dbReference type="PeptideAtlas" id="Q3UQV5"/>
<dbReference type="ProteomicsDB" id="263480">
    <molecule id="Q3UQV5-1"/>
</dbReference>
<dbReference type="ProteomicsDB" id="263481">
    <molecule id="Q3UQV5-2"/>
</dbReference>
<dbReference type="Antibodypedia" id="51228">
    <property type="antibodies" value="70 antibodies from 16 providers"/>
</dbReference>
<dbReference type="Ensembl" id="ENSMUST00000032107.10">
    <molecule id="Q3UQV5-1"/>
    <property type="protein sequence ID" value="ENSMUSP00000032107.8"/>
    <property type="gene ID" value="ENSMUSG00000030031.15"/>
</dbReference>
<dbReference type="Ensembl" id="ENSMUST00000119582.3">
    <molecule id="Q3UQV5-2"/>
    <property type="protein sequence ID" value="ENSMUSP00000113739.2"/>
    <property type="gene ID" value="ENSMUSG00000030031.15"/>
</dbReference>
<dbReference type="GeneID" id="243574"/>
<dbReference type="KEGG" id="mmu:243574"/>
<dbReference type="UCSC" id="uc009czw.3">
    <molecule id="Q3UQV5-1"/>
    <property type="organism name" value="mouse"/>
</dbReference>
<dbReference type="AGR" id="MGI:2661430"/>
<dbReference type="CTD" id="84541"/>
<dbReference type="MGI" id="MGI:2661430">
    <property type="gene designation" value="Kbtbd8"/>
</dbReference>
<dbReference type="VEuPathDB" id="HostDB:ENSMUSG00000030031"/>
<dbReference type="eggNOG" id="KOG4441">
    <property type="taxonomic scope" value="Eukaryota"/>
</dbReference>
<dbReference type="GeneTree" id="ENSGT00940000158653"/>
<dbReference type="HOGENOM" id="CLU_004253_14_6_1"/>
<dbReference type="InParanoid" id="Q3UQV5"/>
<dbReference type="OMA" id="FWMYDHA"/>
<dbReference type="OrthoDB" id="45365at2759"/>
<dbReference type="PhylomeDB" id="Q3UQV5"/>
<dbReference type="TreeFam" id="TF332672"/>
<dbReference type="Reactome" id="R-MMU-8951664">
    <property type="pathway name" value="Neddylation"/>
</dbReference>
<dbReference type="Reactome" id="R-MMU-983168">
    <property type="pathway name" value="Antigen processing: Ubiquitination &amp; Proteasome degradation"/>
</dbReference>
<dbReference type="BioGRID-ORCS" id="243574">
    <property type="hits" value="0 hits in 78 CRISPR screens"/>
</dbReference>
<dbReference type="PRO" id="PR:Q3UQV5"/>
<dbReference type="Proteomes" id="UP000000589">
    <property type="component" value="Chromosome 6"/>
</dbReference>
<dbReference type="RNAct" id="Q3UQV5">
    <property type="molecule type" value="protein"/>
</dbReference>
<dbReference type="Bgee" id="ENSMUSG00000030031">
    <property type="expression patterns" value="Expressed in secondary oocyte and 202 other cell types or tissues"/>
</dbReference>
<dbReference type="ExpressionAtlas" id="Q3UQV5">
    <property type="expression patterns" value="baseline and differential"/>
</dbReference>
<dbReference type="GO" id="GO:0031463">
    <property type="term" value="C:Cul3-RING ubiquitin ligase complex"/>
    <property type="evidence" value="ECO:0000250"/>
    <property type="project" value="UniProtKB"/>
</dbReference>
<dbReference type="GO" id="GO:0005794">
    <property type="term" value="C:Golgi apparatus"/>
    <property type="evidence" value="ECO:0007669"/>
    <property type="project" value="UniProtKB-SubCell"/>
</dbReference>
<dbReference type="GO" id="GO:0005819">
    <property type="term" value="C:spindle"/>
    <property type="evidence" value="ECO:0007669"/>
    <property type="project" value="UniProtKB-SubCell"/>
</dbReference>
<dbReference type="GO" id="GO:0014032">
    <property type="term" value="P:neural crest cell development"/>
    <property type="evidence" value="ECO:0000250"/>
    <property type="project" value="UniProtKB"/>
</dbReference>
<dbReference type="GO" id="GO:0014029">
    <property type="term" value="P:neural crest formation"/>
    <property type="evidence" value="ECO:0000250"/>
    <property type="project" value="UniProtKB"/>
</dbReference>
<dbReference type="GO" id="GO:0006513">
    <property type="term" value="P:protein monoubiquitination"/>
    <property type="evidence" value="ECO:0000250"/>
    <property type="project" value="UniProtKB"/>
</dbReference>
<dbReference type="GO" id="GO:0006417">
    <property type="term" value="P:regulation of translation"/>
    <property type="evidence" value="ECO:0007669"/>
    <property type="project" value="UniProtKB-KW"/>
</dbReference>
<dbReference type="CDD" id="cd18274">
    <property type="entry name" value="BTB_POZ_KBTBD8"/>
    <property type="match status" value="1"/>
</dbReference>
<dbReference type="FunFam" id="3.30.710.10:FF:000006">
    <property type="entry name" value="Kelch repeat and BTB domain-containing 6"/>
    <property type="match status" value="1"/>
</dbReference>
<dbReference type="FunFam" id="2.120.10.80:FF:000020">
    <property type="entry name" value="Kelch repeat and BTB domain-containing protein 8"/>
    <property type="match status" value="1"/>
</dbReference>
<dbReference type="FunFam" id="1.25.40.420:FF:000014">
    <property type="entry name" value="kelch repeat and BTB domain-containing protein 8"/>
    <property type="match status" value="1"/>
</dbReference>
<dbReference type="Gene3D" id="1.25.40.420">
    <property type="match status" value="1"/>
</dbReference>
<dbReference type="Gene3D" id="2.120.10.80">
    <property type="entry name" value="Kelch-type beta propeller"/>
    <property type="match status" value="1"/>
</dbReference>
<dbReference type="Gene3D" id="3.30.710.10">
    <property type="entry name" value="Potassium Channel Kv1.1, Chain A"/>
    <property type="match status" value="1"/>
</dbReference>
<dbReference type="InterPro" id="IPR011705">
    <property type="entry name" value="BACK"/>
</dbReference>
<dbReference type="InterPro" id="IPR017096">
    <property type="entry name" value="BTB-kelch_protein"/>
</dbReference>
<dbReference type="InterPro" id="IPR000210">
    <property type="entry name" value="BTB/POZ_dom"/>
</dbReference>
<dbReference type="InterPro" id="IPR028764">
    <property type="entry name" value="BTB/POZ_KBTBD8"/>
</dbReference>
<dbReference type="InterPro" id="IPR015915">
    <property type="entry name" value="Kelch-typ_b-propeller"/>
</dbReference>
<dbReference type="InterPro" id="IPR006652">
    <property type="entry name" value="Kelch_1"/>
</dbReference>
<dbReference type="InterPro" id="IPR011333">
    <property type="entry name" value="SKP1/BTB/POZ_sf"/>
</dbReference>
<dbReference type="PANTHER" id="PTHR24412">
    <property type="entry name" value="KELCH PROTEIN"/>
    <property type="match status" value="1"/>
</dbReference>
<dbReference type="PANTHER" id="PTHR24412:SF433">
    <property type="entry name" value="KELCH REPEAT AND BTB DOMAIN-CONTAINING PROTEIN 8"/>
    <property type="match status" value="1"/>
</dbReference>
<dbReference type="Pfam" id="PF07707">
    <property type="entry name" value="BACK"/>
    <property type="match status" value="1"/>
</dbReference>
<dbReference type="Pfam" id="PF00651">
    <property type="entry name" value="BTB"/>
    <property type="match status" value="1"/>
</dbReference>
<dbReference type="Pfam" id="PF01344">
    <property type="entry name" value="Kelch_1"/>
    <property type="match status" value="3"/>
</dbReference>
<dbReference type="PIRSF" id="PIRSF037037">
    <property type="entry name" value="Kelch-like_protein_gigaxonin"/>
    <property type="match status" value="1"/>
</dbReference>
<dbReference type="SMART" id="SM00875">
    <property type="entry name" value="BACK"/>
    <property type="match status" value="1"/>
</dbReference>
<dbReference type="SMART" id="SM00225">
    <property type="entry name" value="BTB"/>
    <property type="match status" value="1"/>
</dbReference>
<dbReference type="SMART" id="SM00612">
    <property type="entry name" value="Kelch"/>
    <property type="match status" value="3"/>
</dbReference>
<dbReference type="SUPFAM" id="SSF117281">
    <property type="entry name" value="Kelch motif"/>
    <property type="match status" value="1"/>
</dbReference>
<dbReference type="SUPFAM" id="SSF54695">
    <property type="entry name" value="POZ domain"/>
    <property type="match status" value="1"/>
</dbReference>
<dbReference type="PROSITE" id="PS50097">
    <property type="entry name" value="BTB"/>
    <property type="match status" value="1"/>
</dbReference>
<feature type="chain" id="PRO_0000278221" description="Kelch repeat and BTB domain-containing protein 8">
    <location>
        <begin position="1"/>
        <end position="599"/>
    </location>
</feature>
<feature type="domain" description="BTB" evidence="2">
    <location>
        <begin position="49"/>
        <end position="117"/>
    </location>
</feature>
<feature type="domain" description="BACK">
    <location>
        <begin position="152"/>
        <end position="254"/>
    </location>
</feature>
<feature type="repeat" description="Kelch 1">
    <location>
        <begin position="334"/>
        <end position="388"/>
    </location>
</feature>
<feature type="repeat" description="Kelch 2">
    <location>
        <begin position="389"/>
        <end position="439"/>
    </location>
</feature>
<feature type="repeat" description="Kelch 3">
    <location>
        <begin position="441"/>
        <end position="479"/>
    </location>
</feature>
<feature type="repeat" description="Kelch 4">
    <location>
        <begin position="481"/>
        <end position="530"/>
    </location>
</feature>
<feature type="repeat" description="Kelch 5">
    <location>
        <begin position="540"/>
        <end position="586"/>
    </location>
</feature>
<feature type="region of interest" description="Disordered" evidence="3">
    <location>
        <begin position="1"/>
        <end position="25"/>
    </location>
</feature>
<feature type="compositionally biased region" description="Polar residues" evidence="3">
    <location>
        <begin position="7"/>
        <end position="25"/>
    </location>
</feature>
<feature type="splice variant" id="VSP_023186" description="In isoform 2." evidence="5">
    <location>
        <begin position="1"/>
        <end position="77"/>
    </location>
</feature>
<feature type="sequence conflict" description="In Ref. 1; BAE39583." evidence="6" ref="1">
    <original>M</original>
    <variation>V</variation>
    <location>
        <position position="420"/>
    </location>
</feature>
<comment type="function">
    <text evidence="1">Substrate-specific adapter of a BCR (BTB-CUL3-RBX1) E3 ubiquitin ligase complex that acts as a regulator of neural crest specification. The BCR(KBTBD8) complex acts by mediating monoubiquitination of NOLC1 and TCOF1: monoubiquitination promotes the formation of a NOLC1-TCOF1 complex that acts as a platform to connect RNA polymerase I with enzymes responsible for ribosomal processing and modification, leading to remodel the translational program of differentiating cells in favor of neural crest specification.</text>
</comment>
<comment type="subunit">
    <text evidence="1">Component of the BCR(KBTBD8) E3 ubiquitin ligase complex, at least composed of CUL3, KBTBD8 and RBX1.</text>
</comment>
<comment type="subcellular location">
    <subcellularLocation>
        <location evidence="1">Cytoplasm</location>
        <location evidence="1">Cytoskeleton</location>
        <location evidence="1">Spindle</location>
    </subcellularLocation>
    <subcellularLocation>
        <location evidence="1">Golgi apparatus</location>
    </subcellularLocation>
    <text evidence="1">Translocates to the spindle apparatus during mitosis.</text>
</comment>
<comment type="alternative products">
    <event type="alternative splicing"/>
    <isoform>
        <id>Q3UQV5-1</id>
        <name>1</name>
        <sequence type="displayed"/>
    </isoform>
    <isoform>
        <id>Q3UQV5-2</id>
        <name>2</name>
        <sequence type="described" ref="VSP_023186"/>
    </isoform>
</comment>
<comment type="developmental stage">
    <text evidence="4">Down-regulated in differentiating embryonic stem cells (ESCs).</text>
</comment>
<comment type="similarity">
    <text evidence="6">Belongs to the KBTBD8 family.</text>
</comment>
<comment type="sequence caution" evidence="6">
    <conflict type="erroneous initiation">
        <sequence resource="EMBL-CDS" id="AAH88734"/>
    </conflict>
</comment>
<proteinExistence type="evidence at transcript level"/>
<sequence length="599" mass="68660">MAASADLSKSSPTPNGIPSSDTANDTMDPFHACSILKQLKTMYDEGQLTDIVVEVDHGKTFSCHRNVLAAISPYFRSMFTSGLTESTQKEVRIIGVEAESMDLVLNYAYTSRVILTEANVQALFTTASIFQIPSIQDQCAKYMISHLDPQNSIGVFIFADHYGHQELGDRSKEYIRKKFLCVTKEQEFLQLTKDQLISILDSDDLNVDREEHVYESIIRWFEHEQSEREVHLPEIFAKCIRFPLMEDTFIEKIPPQFAQAIVKSCGEPSNTSGCTQRLGMTASEMIICFDAAHKHSGKKQTVPCLDIVTGRVFKLCKPPNDLREVGILVSPDNDIYIAGGYRPSSSEVSIDHKAENDFWMYDHSTNRWLSKPSLLRARIGCKLVYCCGKMYAIGGRVYEGDGRNSLKSVECYDSRENCWMTVCAMPVAMEFHNAVEHKEKIYVLQGEFFLFYEPQKDYWGFLTPMTVPRIQGLAAVYKDSIYYIAGTCGNHQRVFTVEAYDIELNKWTRKKDFPCDQSINPYLKLVLFQNKLHLFVRATQVTVEEHIFRTSRKNSLYQYDDIADQWMKVYETPDRLWDLGRHFECAVAKLYPQCLQKVL</sequence>
<gene>
    <name type="primary">Kbtbd8</name>
    <name type="synonym">Kiaa1842</name>
</gene>
<organism>
    <name type="scientific">Mus musculus</name>
    <name type="common">Mouse</name>
    <dbReference type="NCBI Taxonomy" id="10090"/>
    <lineage>
        <taxon>Eukaryota</taxon>
        <taxon>Metazoa</taxon>
        <taxon>Chordata</taxon>
        <taxon>Craniata</taxon>
        <taxon>Vertebrata</taxon>
        <taxon>Euteleostomi</taxon>
        <taxon>Mammalia</taxon>
        <taxon>Eutheria</taxon>
        <taxon>Euarchontoglires</taxon>
        <taxon>Glires</taxon>
        <taxon>Rodentia</taxon>
        <taxon>Myomorpha</taxon>
        <taxon>Muroidea</taxon>
        <taxon>Muridae</taxon>
        <taxon>Murinae</taxon>
        <taxon>Mus</taxon>
        <taxon>Mus</taxon>
    </lineage>
</organism>
<evidence type="ECO:0000250" key="1">
    <source>
        <dbReference type="UniProtKB" id="Q8NFY9"/>
    </source>
</evidence>
<evidence type="ECO:0000255" key="2">
    <source>
        <dbReference type="PROSITE-ProRule" id="PRU00037"/>
    </source>
</evidence>
<evidence type="ECO:0000256" key="3">
    <source>
        <dbReference type="SAM" id="MobiDB-lite"/>
    </source>
</evidence>
<evidence type="ECO:0000269" key="4">
    <source>
    </source>
</evidence>
<evidence type="ECO:0000303" key="5">
    <source>
    </source>
</evidence>
<evidence type="ECO:0000305" key="6"/>
<keyword id="KW-0025">Alternative splicing</keyword>
<keyword id="KW-0963">Cytoplasm</keyword>
<keyword id="KW-0206">Cytoskeleton</keyword>
<keyword id="KW-0333">Golgi apparatus</keyword>
<keyword id="KW-0880">Kelch repeat</keyword>
<keyword id="KW-1185">Reference proteome</keyword>
<keyword id="KW-0677">Repeat</keyword>
<keyword id="KW-0810">Translation regulation</keyword>
<keyword id="KW-0833">Ubl conjugation pathway</keyword>
<reference key="1">
    <citation type="journal article" date="2005" name="Science">
        <title>The transcriptional landscape of the mammalian genome.</title>
        <authorList>
            <person name="Carninci P."/>
            <person name="Kasukawa T."/>
            <person name="Katayama S."/>
            <person name="Gough J."/>
            <person name="Frith M.C."/>
            <person name="Maeda N."/>
            <person name="Oyama R."/>
            <person name="Ravasi T."/>
            <person name="Lenhard B."/>
            <person name="Wells C."/>
            <person name="Kodzius R."/>
            <person name="Shimokawa K."/>
            <person name="Bajic V.B."/>
            <person name="Brenner S.E."/>
            <person name="Batalov S."/>
            <person name="Forrest A.R."/>
            <person name="Zavolan M."/>
            <person name="Davis M.J."/>
            <person name="Wilming L.G."/>
            <person name="Aidinis V."/>
            <person name="Allen J.E."/>
            <person name="Ambesi-Impiombato A."/>
            <person name="Apweiler R."/>
            <person name="Aturaliya R.N."/>
            <person name="Bailey T.L."/>
            <person name="Bansal M."/>
            <person name="Baxter L."/>
            <person name="Beisel K.W."/>
            <person name="Bersano T."/>
            <person name="Bono H."/>
            <person name="Chalk A.M."/>
            <person name="Chiu K.P."/>
            <person name="Choudhary V."/>
            <person name="Christoffels A."/>
            <person name="Clutterbuck D.R."/>
            <person name="Crowe M.L."/>
            <person name="Dalla E."/>
            <person name="Dalrymple B.P."/>
            <person name="de Bono B."/>
            <person name="Della Gatta G."/>
            <person name="di Bernardo D."/>
            <person name="Down T."/>
            <person name="Engstrom P."/>
            <person name="Fagiolini M."/>
            <person name="Faulkner G."/>
            <person name="Fletcher C.F."/>
            <person name="Fukushima T."/>
            <person name="Furuno M."/>
            <person name="Futaki S."/>
            <person name="Gariboldi M."/>
            <person name="Georgii-Hemming P."/>
            <person name="Gingeras T.R."/>
            <person name="Gojobori T."/>
            <person name="Green R.E."/>
            <person name="Gustincich S."/>
            <person name="Harbers M."/>
            <person name="Hayashi Y."/>
            <person name="Hensch T.K."/>
            <person name="Hirokawa N."/>
            <person name="Hill D."/>
            <person name="Huminiecki L."/>
            <person name="Iacono M."/>
            <person name="Ikeo K."/>
            <person name="Iwama A."/>
            <person name="Ishikawa T."/>
            <person name="Jakt M."/>
            <person name="Kanapin A."/>
            <person name="Katoh M."/>
            <person name="Kawasawa Y."/>
            <person name="Kelso J."/>
            <person name="Kitamura H."/>
            <person name="Kitano H."/>
            <person name="Kollias G."/>
            <person name="Krishnan S.P."/>
            <person name="Kruger A."/>
            <person name="Kummerfeld S.K."/>
            <person name="Kurochkin I.V."/>
            <person name="Lareau L.F."/>
            <person name="Lazarevic D."/>
            <person name="Lipovich L."/>
            <person name="Liu J."/>
            <person name="Liuni S."/>
            <person name="McWilliam S."/>
            <person name="Madan Babu M."/>
            <person name="Madera M."/>
            <person name="Marchionni L."/>
            <person name="Matsuda H."/>
            <person name="Matsuzawa S."/>
            <person name="Miki H."/>
            <person name="Mignone F."/>
            <person name="Miyake S."/>
            <person name="Morris K."/>
            <person name="Mottagui-Tabar S."/>
            <person name="Mulder N."/>
            <person name="Nakano N."/>
            <person name="Nakauchi H."/>
            <person name="Ng P."/>
            <person name="Nilsson R."/>
            <person name="Nishiguchi S."/>
            <person name="Nishikawa S."/>
            <person name="Nori F."/>
            <person name="Ohara O."/>
            <person name="Okazaki Y."/>
            <person name="Orlando V."/>
            <person name="Pang K.C."/>
            <person name="Pavan W.J."/>
            <person name="Pavesi G."/>
            <person name="Pesole G."/>
            <person name="Petrovsky N."/>
            <person name="Piazza S."/>
            <person name="Reed J."/>
            <person name="Reid J.F."/>
            <person name="Ring B.Z."/>
            <person name="Ringwald M."/>
            <person name="Rost B."/>
            <person name="Ruan Y."/>
            <person name="Salzberg S.L."/>
            <person name="Sandelin A."/>
            <person name="Schneider C."/>
            <person name="Schoenbach C."/>
            <person name="Sekiguchi K."/>
            <person name="Semple C.A."/>
            <person name="Seno S."/>
            <person name="Sessa L."/>
            <person name="Sheng Y."/>
            <person name="Shibata Y."/>
            <person name="Shimada H."/>
            <person name="Shimada K."/>
            <person name="Silva D."/>
            <person name="Sinclair B."/>
            <person name="Sperling S."/>
            <person name="Stupka E."/>
            <person name="Sugiura K."/>
            <person name="Sultana R."/>
            <person name="Takenaka Y."/>
            <person name="Taki K."/>
            <person name="Tammoja K."/>
            <person name="Tan S.L."/>
            <person name="Tang S."/>
            <person name="Taylor M.S."/>
            <person name="Tegner J."/>
            <person name="Teichmann S.A."/>
            <person name="Ueda H.R."/>
            <person name="van Nimwegen E."/>
            <person name="Verardo R."/>
            <person name="Wei C.L."/>
            <person name="Yagi K."/>
            <person name="Yamanishi H."/>
            <person name="Zabarovsky E."/>
            <person name="Zhu S."/>
            <person name="Zimmer A."/>
            <person name="Hide W."/>
            <person name="Bult C."/>
            <person name="Grimmond S.M."/>
            <person name="Teasdale R.D."/>
            <person name="Liu E.T."/>
            <person name="Brusic V."/>
            <person name="Quackenbush J."/>
            <person name="Wahlestedt C."/>
            <person name="Mattick J.S."/>
            <person name="Hume D.A."/>
            <person name="Kai C."/>
            <person name="Sasaki D."/>
            <person name="Tomaru Y."/>
            <person name="Fukuda S."/>
            <person name="Kanamori-Katayama M."/>
            <person name="Suzuki M."/>
            <person name="Aoki J."/>
            <person name="Arakawa T."/>
            <person name="Iida J."/>
            <person name="Imamura K."/>
            <person name="Itoh M."/>
            <person name="Kato T."/>
            <person name="Kawaji H."/>
            <person name="Kawagashira N."/>
            <person name="Kawashima T."/>
            <person name="Kojima M."/>
            <person name="Kondo S."/>
            <person name="Konno H."/>
            <person name="Nakano K."/>
            <person name="Ninomiya N."/>
            <person name="Nishio T."/>
            <person name="Okada M."/>
            <person name="Plessy C."/>
            <person name="Shibata K."/>
            <person name="Shiraki T."/>
            <person name="Suzuki S."/>
            <person name="Tagami M."/>
            <person name="Waki K."/>
            <person name="Watahiki A."/>
            <person name="Okamura-Oho Y."/>
            <person name="Suzuki H."/>
            <person name="Kawai J."/>
            <person name="Hayashizaki Y."/>
        </authorList>
    </citation>
    <scope>NUCLEOTIDE SEQUENCE [LARGE SCALE MRNA] (ISOFORMS 1 AND 2)</scope>
    <source>
        <strain>C57BL/6J</strain>
        <tissue>Eye</tissue>
        <tissue>Liver</tissue>
    </source>
</reference>
<reference key="2">
    <citation type="journal article" date="2004" name="Genome Res.">
        <title>The status, quality, and expansion of the NIH full-length cDNA project: the Mammalian Gene Collection (MGC).</title>
        <authorList>
            <consortium name="The MGC Project Team"/>
        </authorList>
    </citation>
    <scope>NUCLEOTIDE SEQUENCE [LARGE SCALE MRNA] OF 9-599 (ISOFORM 1)</scope>
    <source>
        <strain>C57BL/6J</strain>
        <tissue>Embryonic germ cell</tissue>
    </source>
</reference>
<reference key="3">
    <citation type="submission" date="2005-02" db="EMBL/GenBank/DDBJ databases">
        <title>Prediction of the coding sequences of mouse homologues of KIAA gene. The complete nucleotide sequences of mouse KIAA-homologous cDNAs identified by screening of terminal sequences of cDNA clones randomly sampled from size-fractionated libraries.</title>
        <authorList>
            <person name="Okazaki N."/>
            <person name="Kikuno R.F."/>
            <person name="Ohara R."/>
            <person name="Inamoto S."/>
            <person name="Nagase T."/>
            <person name="Ohara O."/>
            <person name="Koga H."/>
        </authorList>
    </citation>
    <scope>NUCLEOTIDE SEQUENCE [LARGE SCALE MRNA] OF 337-599 (ISOFORMS 1/2)</scope>
    <source>
        <tissue>Brain</tissue>
    </source>
</reference>
<reference key="4">
    <citation type="journal article" date="2015" name="Nature">
        <title>Cell-fate determination by ubiquitin-dependent regulation of translation.</title>
        <authorList>
            <person name="Werner A."/>
            <person name="Iwasaki S."/>
            <person name="McGourty C.A."/>
            <person name="Medina-Ruiz S."/>
            <person name="Teerikorpi N."/>
            <person name="Fedrigo I."/>
            <person name="Ingolia N.T."/>
            <person name="Rape M."/>
        </authorList>
    </citation>
    <scope>DEVELOPMENTAL STAGE</scope>
</reference>
<protein>
    <recommendedName>
        <fullName>Kelch repeat and BTB domain-containing protein 8</fullName>
    </recommendedName>
</protein>
<accession>Q3UQV5</accession>
<accession>Q3TJB2</accession>
<accession>Q5M7B2</accession>
<accession>Q8CH97</accession>
<name>KBTB8_MOUSE</name>